<proteinExistence type="evidence at protein level"/>
<dbReference type="EMBL" id="AJ278482">
    <property type="protein sequence ID" value="CAC00687.1"/>
    <property type="molecule type" value="mRNA"/>
</dbReference>
<dbReference type="EMBL" id="AL133411">
    <property type="status" value="NOT_ANNOTATED_CDS"/>
    <property type="molecule type" value="Genomic_DNA"/>
</dbReference>
<dbReference type="EMBL" id="CH471071">
    <property type="protein sequence ID" value="EAW58566.1"/>
    <property type="molecule type" value="Genomic_DNA"/>
</dbReference>
<dbReference type="EMBL" id="BC014307">
    <property type="protein sequence ID" value="AAH14307.1"/>
    <property type="molecule type" value="mRNA"/>
</dbReference>
<dbReference type="EMBL" id="BC137351">
    <property type="protein sequence ID" value="AAI37352.1"/>
    <property type="molecule type" value="mRNA"/>
</dbReference>
<dbReference type="EMBL" id="BC137352">
    <property type="protein sequence ID" value="AAI37353.1"/>
    <property type="molecule type" value="mRNA"/>
</dbReference>
<dbReference type="EMBL" id="BC144602">
    <property type="protein sequence ID" value="AAI44603.1"/>
    <property type="molecule type" value="mRNA"/>
</dbReference>
<dbReference type="CCDS" id="CCDS35001.1">
    <molecule id="Q9NQ60-1"/>
</dbReference>
<dbReference type="CCDS" id="CCDS55300.1">
    <molecule id="Q9NQ60-3"/>
</dbReference>
<dbReference type="RefSeq" id="NP_001155057.1">
    <molecule id="Q9NQ60-3"/>
    <property type="nucleotide sequence ID" value="NM_001161585.2"/>
</dbReference>
<dbReference type="RefSeq" id="NP_065692.2">
    <molecule id="Q9NQ60-1"/>
    <property type="nucleotide sequence ID" value="NM_020641.3"/>
</dbReference>
<dbReference type="STRING" id="9606.ENSP00000369371"/>
<dbReference type="GlyCosmos" id="Q9NQ60">
    <property type="glycosylation" value="2 sites, No reported glycans"/>
</dbReference>
<dbReference type="GlyGen" id="Q9NQ60">
    <property type="glycosylation" value="3 sites, 1 O-linked glycan (1 site)"/>
</dbReference>
<dbReference type="iPTMnet" id="Q9NQ60"/>
<dbReference type="PhosphoSitePlus" id="Q9NQ60"/>
<dbReference type="BioMuta" id="EQTN"/>
<dbReference type="DMDM" id="147742918"/>
<dbReference type="MassIVE" id="Q9NQ60"/>
<dbReference type="PaxDb" id="9606-ENSP00000369371"/>
<dbReference type="PeptideAtlas" id="Q9NQ60"/>
<dbReference type="ProteomicsDB" id="82084">
    <molecule id="Q9NQ60-1"/>
</dbReference>
<dbReference type="ProteomicsDB" id="82085">
    <molecule id="Q9NQ60-2"/>
</dbReference>
<dbReference type="ProteomicsDB" id="82086">
    <molecule id="Q9NQ60-3"/>
</dbReference>
<dbReference type="Antibodypedia" id="2383">
    <property type="antibodies" value="24 antibodies from 13 providers"/>
</dbReference>
<dbReference type="DNASU" id="54586"/>
<dbReference type="Ensembl" id="ENST00000380031.2">
    <molecule id="Q9NQ60-2"/>
    <property type="protein sequence ID" value="ENSP00000369370.1"/>
    <property type="gene ID" value="ENSG00000120160.11"/>
</dbReference>
<dbReference type="Ensembl" id="ENST00000380032.8">
    <molecule id="Q9NQ60-1"/>
    <property type="protein sequence ID" value="ENSP00000369371.3"/>
    <property type="gene ID" value="ENSG00000120160.11"/>
</dbReference>
<dbReference type="Ensembl" id="ENST00000537675.5">
    <molecule id="Q9NQ60-3"/>
    <property type="protein sequence ID" value="ENSP00000441630.1"/>
    <property type="gene ID" value="ENSG00000120160.11"/>
</dbReference>
<dbReference type="GeneID" id="54586"/>
<dbReference type="KEGG" id="hsa:54586"/>
<dbReference type="MANE-Select" id="ENST00000380032.8">
    <property type="protein sequence ID" value="ENSP00000369371.3"/>
    <property type="RefSeq nucleotide sequence ID" value="NM_020641.3"/>
    <property type="RefSeq protein sequence ID" value="NP_065692.2"/>
</dbReference>
<dbReference type="UCSC" id="uc003zql.4">
    <molecule id="Q9NQ60-1"/>
    <property type="organism name" value="human"/>
</dbReference>
<dbReference type="AGR" id="HGNC:1359"/>
<dbReference type="CTD" id="54586"/>
<dbReference type="GeneCards" id="EQTN"/>
<dbReference type="HGNC" id="HGNC:1359">
    <property type="gene designation" value="EQTN"/>
</dbReference>
<dbReference type="HPA" id="ENSG00000120160">
    <property type="expression patterns" value="Tissue enriched (testis)"/>
</dbReference>
<dbReference type="MIM" id="617653">
    <property type="type" value="gene"/>
</dbReference>
<dbReference type="neXtProt" id="NX_Q9NQ60"/>
<dbReference type="OpenTargets" id="ENSG00000120160"/>
<dbReference type="PharmGKB" id="PA25969"/>
<dbReference type="VEuPathDB" id="HostDB:ENSG00000120160"/>
<dbReference type="eggNOG" id="KOG2248">
    <property type="taxonomic scope" value="Eukaryota"/>
</dbReference>
<dbReference type="GeneTree" id="ENSGT00390000010786"/>
<dbReference type="HOGENOM" id="CLU_082439_0_0_1"/>
<dbReference type="InParanoid" id="Q9NQ60"/>
<dbReference type="OMA" id="SHKNIQR"/>
<dbReference type="OrthoDB" id="9530648at2759"/>
<dbReference type="PAN-GO" id="Q9NQ60">
    <property type="GO annotations" value="6 GO annotations based on evolutionary models"/>
</dbReference>
<dbReference type="PhylomeDB" id="Q9NQ60"/>
<dbReference type="TreeFam" id="TF337449"/>
<dbReference type="PathwayCommons" id="Q9NQ60"/>
<dbReference type="BioGRID-ORCS" id="54586">
    <property type="hits" value="11 hits in 1148 CRISPR screens"/>
</dbReference>
<dbReference type="ChiTaRS" id="EQTN">
    <property type="organism name" value="human"/>
</dbReference>
<dbReference type="GenomeRNAi" id="54586"/>
<dbReference type="Pharos" id="Q9NQ60">
    <property type="development level" value="Tdark"/>
</dbReference>
<dbReference type="PRO" id="PR:Q9NQ60"/>
<dbReference type="Proteomes" id="UP000005640">
    <property type="component" value="Chromosome 9"/>
</dbReference>
<dbReference type="RNAct" id="Q9NQ60">
    <property type="molecule type" value="protein"/>
</dbReference>
<dbReference type="Bgee" id="ENSG00000120160">
    <property type="expression patterns" value="Expressed in sperm and 91 other cell types or tissues"/>
</dbReference>
<dbReference type="GO" id="GO:0002079">
    <property type="term" value="C:inner acrosomal membrane"/>
    <property type="evidence" value="ECO:0000250"/>
    <property type="project" value="UniProtKB"/>
</dbReference>
<dbReference type="GO" id="GO:0002081">
    <property type="term" value="C:outer acrosomal membrane"/>
    <property type="evidence" value="ECO:0000250"/>
    <property type="project" value="UniProtKB"/>
</dbReference>
<dbReference type="GO" id="GO:0005886">
    <property type="term" value="C:plasma membrane"/>
    <property type="evidence" value="ECO:0000318"/>
    <property type="project" value="GO_Central"/>
</dbReference>
<dbReference type="GO" id="GO:0060478">
    <property type="term" value="P:acrosomal vesicle exocytosis"/>
    <property type="evidence" value="ECO:0000318"/>
    <property type="project" value="GO_Central"/>
</dbReference>
<dbReference type="GO" id="GO:0006897">
    <property type="term" value="P:endocytosis"/>
    <property type="evidence" value="ECO:0000318"/>
    <property type="project" value="GO_Central"/>
</dbReference>
<dbReference type="GO" id="GO:0007342">
    <property type="term" value="P:fusion of sperm to egg plasma membrane involved in single fertilization"/>
    <property type="evidence" value="ECO:0000318"/>
    <property type="project" value="GO_Central"/>
</dbReference>
<dbReference type="InterPro" id="IPR029282">
    <property type="entry name" value="Eqtn/Afaf"/>
</dbReference>
<dbReference type="PANTHER" id="PTHR36874">
    <property type="entry name" value="EQUATORIN"/>
    <property type="match status" value="1"/>
</dbReference>
<dbReference type="PANTHER" id="PTHR36874:SF1">
    <property type="entry name" value="EQUATORIN"/>
    <property type="match status" value="1"/>
</dbReference>
<dbReference type="Pfam" id="PF15339">
    <property type="entry name" value="Afaf"/>
    <property type="match status" value="1"/>
</dbReference>
<protein>
    <recommendedName>
        <fullName>Equatorin</fullName>
    </recommendedName>
    <alternativeName>
        <fullName>Acrosome formation-associated factor</fullName>
    </alternativeName>
</protein>
<sequence>MNFILFIFIPGVFSLKSSTLKPTIEALPNVLPLNEDVNKQEEKNEDHTPNYAPANEKNGNYYKDIKQYVFTTQNPNGTESEISVRATTDLNFALKNDKTVNATTYEKSTIEEETTTSEPSHKNIQRSTPNVPAFWTMLAKAINGTAVVMDDKDQLFHPIPESDVNATQGENQPDLEDLKIKIMLGISLMTLLLFVVLLAFCSATLYKLRHLSYKSCESQYSVNPELATMSYFHPSEGVSDTSFSKSAESSTFLGTTSSDMRRSGTRTSESKIMTDIISIGSDNEMHENDESVTR</sequence>
<organism>
    <name type="scientific">Homo sapiens</name>
    <name type="common">Human</name>
    <dbReference type="NCBI Taxonomy" id="9606"/>
    <lineage>
        <taxon>Eukaryota</taxon>
        <taxon>Metazoa</taxon>
        <taxon>Chordata</taxon>
        <taxon>Craniata</taxon>
        <taxon>Vertebrata</taxon>
        <taxon>Euteleostomi</taxon>
        <taxon>Mammalia</taxon>
        <taxon>Eutheria</taxon>
        <taxon>Euarchontoglires</taxon>
        <taxon>Primates</taxon>
        <taxon>Haplorrhini</taxon>
        <taxon>Catarrhini</taxon>
        <taxon>Hominidae</taxon>
        <taxon>Homo</taxon>
    </lineage>
</organism>
<evidence type="ECO:0000250" key="1"/>
<evidence type="ECO:0000255" key="2"/>
<evidence type="ECO:0000256" key="3">
    <source>
        <dbReference type="SAM" id="MobiDB-lite"/>
    </source>
</evidence>
<evidence type="ECO:0000269" key="4">
    <source>
    </source>
</evidence>
<evidence type="ECO:0000303" key="5">
    <source>
    </source>
</evidence>
<evidence type="ECO:0000305" key="6"/>
<gene>
    <name type="primary">EQTN</name>
    <name type="synonym">AFAF</name>
    <name type="synonym">C9orf11</name>
</gene>
<comment type="function">
    <text evidence="1">Acrosomal membrane-anchored protein involved in the process of fertilization and in acrosome biogenesis.</text>
</comment>
<comment type="subunit">
    <text evidence="1">Interacts with SNAP25.</text>
</comment>
<comment type="subcellular location">
    <subcellularLocation>
        <location evidence="1">Cytoplasmic vesicle</location>
        <location evidence="1">Secretory vesicle</location>
        <location evidence="1">Acrosome membrane</location>
        <topology evidence="1">Single-pass type I membrane protein</topology>
    </subcellularLocation>
    <subcellularLocation>
        <location evidence="1">Cytoplasmic vesicle</location>
        <location evidence="1">Secretory vesicle</location>
        <location evidence="1">Acrosome inner membrane</location>
        <topology evidence="1">Single-pass type I membrane protein</topology>
    </subcellularLocation>
    <subcellularLocation>
        <location evidence="1">Cytoplasmic vesicle</location>
        <location evidence="1">Secretory vesicle</location>
        <location evidence="1">Acrosome outer membrane</location>
        <topology evidence="1">Single-pass type I membrane protein</topology>
    </subcellularLocation>
    <text evidence="1">In the anterior acrosome region, enriched on the inner acrosomal membrane but minimal on the outer acrosomal membrane; in contrast in the posterior acrosome region enriched on both the inner and outer acrosomal membranes.</text>
</comment>
<comment type="alternative products">
    <event type="alternative splicing"/>
    <isoform>
        <id>Q9NQ60-1</id>
        <name>1</name>
        <sequence type="displayed"/>
    </isoform>
    <isoform>
        <id>Q9NQ60-2</id>
        <name>2</name>
        <sequence type="described" ref="VSP_025109 VSP_025110"/>
    </isoform>
    <isoform>
        <id>Q9NQ60-3</id>
        <name>3</name>
        <sequence type="described" ref="VSP_042157"/>
    </isoform>
</comment>
<comment type="tissue specificity">
    <text evidence="4">Isoform 1 is highly expressed in testis. Isoform 2 is expressed at low levels in skin and blood.</text>
</comment>
<comment type="PTM">
    <text evidence="1">Highly N- and O-glycosylated; contains sialic acid.</text>
</comment>
<keyword id="KW-0025">Alternative splicing</keyword>
<keyword id="KW-0968">Cytoplasmic vesicle</keyword>
<keyword id="KW-0325">Glycoprotein</keyword>
<keyword id="KW-0472">Membrane</keyword>
<keyword id="KW-1267">Proteomics identification</keyword>
<keyword id="KW-1185">Reference proteome</keyword>
<keyword id="KW-0732">Signal</keyword>
<keyword id="KW-0812">Transmembrane</keyword>
<keyword id="KW-1133">Transmembrane helix</keyword>
<name>EQTN_HUMAN</name>
<reference key="1">
    <citation type="journal article" date="2000" name="Biochim. Biophys. Acta">
        <title>Isolation and characterisation of a novel human gene (C9orf11) on chromosome 9p21, a region frequently deleted in human cancer.</title>
        <authorList>
            <person name="Ruiz A."/>
            <person name="Pujana M.A."/>
            <person name="Estivill X."/>
        </authorList>
    </citation>
    <scope>NUCLEOTIDE SEQUENCE [MRNA] (ISOFORM 1)</scope>
    <scope>TISSUE SPECIFICITY</scope>
    <scope>ALTERNATIVE SPLICING</scope>
    <scope>VARIANT LYS-274</scope>
</reference>
<reference key="2">
    <citation type="journal article" date="2004" name="Nature">
        <title>DNA sequence and analysis of human chromosome 9.</title>
        <authorList>
            <person name="Humphray S.J."/>
            <person name="Oliver K."/>
            <person name="Hunt A.R."/>
            <person name="Plumb R.W."/>
            <person name="Loveland J.E."/>
            <person name="Howe K.L."/>
            <person name="Andrews T.D."/>
            <person name="Searle S."/>
            <person name="Hunt S.E."/>
            <person name="Scott C.E."/>
            <person name="Jones M.C."/>
            <person name="Ainscough R."/>
            <person name="Almeida J.P."/>
            <person name="Ambrose K.D."/>
            <person name="Ashwell R.I.S."/>
            <person name="Babbage A.K."/>
            <person name="Babbage S."/>
            <person name="Bagguley C.L."/>
            <person name="Bailey J."/>
            <person name="Banerjee R."/>
            <person name="Barker D.J."/>
            <person name="Barlow K.F."/>
            <person name="Bates K."/>
            <person name="Beasley H."/>
            <person name="Beasley O."/>
            <person name="Bird C.P."/>
            <person name="Bray-Allen S."/>
            <person name="Brown A.J."/>
            <person name="Brown J.Y."/>
            <person name="Burford D."/>
            <person name="Burrill W."/>
            <person name="Burton J."/>
            <person name="Carder C."/>
            <person name="Carter N.P."/>
            <person name="Chapman J.C."/>
            <person name="Chen Y."/>
            <person name="Clarke G."/>
            <person name="Clark S.Y."/>
            <person name="Clee C.M."/>
            <person name="Clegg S."/>
            <person name="Collier R.E."/>
            <person name="Corby N."/>
            <person name="Crosier M."/>
            <person name="Cummings A.T."/>
            <person name="Davies J."/>
            <person name="Dhami P."/>
            <person name="Dunn M."/>
            <person name="Dutta I."/>
            <person name="Dyer L.W."/>
            <person name="Earthrowl M.E."/>
            <person name="Faulkner L."/>
            <person name="Fleming C.J."/>
            <person name="Frankish A."/>
            <person name="Frankland J.A."/>
            <person name="French L."/>
            <person name="Fricker D.G."/>
            <person name="Garner P."/>
            <person name="Garnett J."/>
            <person name="Ghori J."/>
            <person name="Gilbert J.G.R."/>
            <person name="Glison C."/>
            <person name="Grafham D.V."/>
            <person name="Gribble S."/>
            <person name="Griffiths C."/>
            <person name="Griffiths-Jones S."/>
            <person name="Grocock R."/>
            <person name="Guy J."/>
            <person name="Hall R.E."/>
            <person name="Hammond S."/>
            <person name="Harley J.L."/>
            <person name="Harrison E.S.I."/>
            <person name="Hart E.A."/>
            <person name="Heath P.D."/>
            <person name="Henderson C.D."/>
            <person name="Hopkins B.L."/>
            <person name="Howard P.J."/>
            <person name="Howden P.J."/>
            <person name="Huckle E."/>
            <person name="Johnson C."/>
            <person name="Johnson D."/>
            <person name="Joy A.A."/>
            <person name="Kay M."/>
            <person name="Keenan S."/>
            <person name="Kershaw J.K."/>
            <person name="Kimberley A.M."/>
            <person name="King A."/>
            <person name="Knights A."/>
            <person name="Laird G.K."/>
            <person name="Langford C."/>
            <person name="Lawlor S."/>
            <person name="Leongamornlert D.A."/>
            <person name="Leversha M."/>
            <person name="Lloyd C."/>
            <person name="Lloyd D.M."/>
            <person name="Lovell J."/>
            <person name="Martin S."/>
            <person name="Mashreghi-Mohammadi M."/>
            <person name="Matthews L."/>
            <person name="McLaren S."/>
            <person name="McLay K.E."/>
            <person name="McMurray A."/>
            <person name="Milne S."/>
            <person name="Nickerson T."/>
            <person name="Nisbett J."/>
            <person name="Nordsiek G."/>
            <person name="Pearce A.V."/>
            <person name="Peck A.I."/>
            <person name="Porter K.M."/>
            <person name="Pandian R."/>
            <person name="Pelan S."/>
            <person name="Phillimore B."/>
            <person name="Povey S."/>
            <person name="Ramsey Y."/>
            <person name="Rand V."/>
            <person name="Scharfe M."/>
            <person name="Sehra H.K."/>
            <person name="Shownkeen R."/>
            <person name="Sims S.K."/>
            <person name="Skuce C.D."/>
            <person name="Smith M."/>
            <person name="Steward C.A."/>
            <person name="Swarbreck D."/>
            <person name="Sycamore N."/>
            <person name="Tester J."/>
            <person name="Thorpe A."/>
            <person name="Tracey A."/>
            <person name="Tromans A."/>
            <person name="Thomas D.W."/>
            <person name="Wall M."/>
            <person name="Wallis J.M."/>
            <person name="West A.P."/>
            <person name="Whitehead S.L."/>
            <person name="Willey D.L."/>
            <person name="Williams S.A."/>
            <person name="Wilming L."/>
            <person name="Wray P.W."/>
            <person name="Young L."/>
            <person name="Ashurst J.L."/>
            <person name="Coulson A."/>
            <person name="Blocker H."/>
            <person name="Durbin R.M."/>
            <person name="Sulston J.E."/>
            <person name="Hubbard T."/>
            <person name="Jackson M.J."/>
            <person name="Bentley D.R."/>
            <person name="Beck S."/>
            <person name="Rogers J."/>
            <person name="Dunham I."/>
        </authorList>
    </citation>
    <scope>NUCLEOTIDE SEQUENCE [LARGE SCALE GENOMIC DNA]</scope>
</reference>
<reference key="3">
    <citation type="submission" date="2005-09" db="EMBL/GenBank/DDBJ databases">
        <authorList>
            <person name="Mural R.J."/>
            <person name="Istrail S."/>
            <person name="Sutton G.G."/>
            <person name="Florea L."/>
            <person name="Halpern A.L."/>
            <person name="Mobarry C.M."/>
            <person name="Lippert R."/>
            <person name="Walenz B."/>
            <person name="Shatkay H."/>
            <person name="Dew I."/>
            <person name="Miller J.R."/>
            <person name="Flanigan M.J."/>
            <person name="Edwards N.J."/>
            <person name="Bolanos R."/>
            <person name="Fasulo D."/>
            <person name="Halldorsson B.V."/>
            <person name="Hannenhalli S."/>
            <person name="Turner R."/>
            <person name="Yooseph S."/>
            <person name="Lu F."/>
            <person name="Nusskern D.R."/>
            <person name="Shue B.C."/>
            <person name="Zheng X.H."/>
            <person name="Zhong F."/>
            <person name="Delcher A.L."/>
            <person name="Huson D.H."/>
            <person name="Kravitz S.A."/>
            <person name="Mouchard L."/>
            <person name="Reinert K."/>
            <person name="Remington K.A."/>
            <person name="Clark A.G."/>
            <person name="Waterman M.S."/>
            <person name="Eichler E.E."/>
            <person name="Adams M.D."/>
            <person name="Hunkapiller M.W."/>
            <person name="Myers E.W."/>
            <person name="Venter J.C."/>
        </authorList>
    </citation>
    <scope>NUCLEOTIDE SEQUENCE [LARGE SCALE GENOMIC DNA]</scope>
</reference>
<reference key="4">
    <citation type="journal article" date="2004" name="Genome Res.">
        <title>The status, quality, and expansion of the NIH full-length cDNA project: the Mammalian Gene Collection (MGC).</title>
        <authorList>
            <consortium name="The MGC Project Team"/>
        </authorList>
    </citation>
    <scope>NUCLEOTIDE SEQUENCE [LARGE SCALE MRNA] (ISOFORMS 1; 2 AND 3)</scope>
    <source>
        <tissue>Testis</tissue>
    </source>
</reference>
<accession>Q9NQ60</accession>
<accession>B2RPB3</accession>
<accession>B7ZMK1</accession>
<accession>Q5TCU1</accession>
<accession>Q96L22</accession>
<feature type="signal peptide" evidence="2">
    <location>
        <begin position="1"/>
        <end position="14"/>
    </location>
</feature>
<feature type="chain" id="PRO_0000286593" description="Equatorin">
    <location>
        <begin position="15"/>
        <end position="294"/>
    </location>
</feature>
<feature type="topological domain" description="Vesicular" evidence="2">
    <location>
        <begin position="15"/>
        <end position="181"/>
    </location>
</feature>
<feature type="transmembrane region" description="Helical" evidence="2">
    <location>
        <begin position="182"/>
        <end position="202"/>
    </location>
</feature>
<feature type="topological domain" description="Cytoplasmic" evidence="2">
    <location>
        <begin position="203"/>
        <end position="294"/>
    </location>
</feature>
<feature type="region of interest" description="Disordered" evidence="3">
    <location>
        <begin position="107"/>
        <end position="126"/>
    </location>
</feature>
<feature type="glycosylation site" description="N-linked (GlcNAc...) asparagine" evidence="2">
    <location>
        <position position="76"/>
    </location>
</feature>
<feature type="glycosylation site" description="N-linked (GlcNAc...) asparagine" evidence="2">
    <location>
        <position position="143"/>
    </location>
</feature>
<feature type="splice variant" id="VSP_042157" description="In isoform 3." evidence="5">
    <original>DKTVNATTYEKSTIEEETTTSEPSHKNIQR</original>
    <variation>G</variation>
    <location>
        <begin position="97"/>
        <end position="126"/>
    </location>
</feature>
<feature type="splice variant" id="VSP_025109" description="In isoform 2." evidence="5">
    <original>RS</original>
    <variation>SI</variation>
    <location>
        <begin position="126"/>
        <end position="127"/>
    </location>
</feature>
<feature type="splice variant" id="VSP_025110" description="In isoform 2." evidence="5">
    <location>
        <begin position="128"/>
        <end position="294"/>
    </location>
</feature>
<feature type="sequence variant" id="VAR_032136" description="In dbSNP:rs12337286.">
    <original>N</original>
    <variation>D</variation>
    <location>
        <position position="101"/>
    </location>
</feature>
<feature type="sequence variant" id="VAR_056727" description="In dbSNP:rs12341576.">
    <original>I</original>
    <variation>T</variation>
    <location>
        <position position="110"/>
    </location>
</feature>
<feature type="sequence variant" id="VAR_032137" description="In dbSNP:rs41305329." evidence="4">
    <original>T</original>
    <variation>K</variation>
    <location>
        <position position="274"/>
    </location>
</feature>
<feature type="sequence conflict" description="In Ref. 1; CAC00687." evidence="6" ref="1">
    <original>D</original>
    <variation>N</variation>
    <location>
        <position position="282"/>
    </location>
</feature>